<sequence>MIEADRLISAGTTLPEDVADRAIRPKLLEEYVGQPQVRSQMEIFIKAAKLRGDALDHLLIFGPPGLGKTTLANIVANEMGVNLRTTSGPVLEKAGDLAAMLTNLEPHDVLFIDEIHRLSPVVEEVLYPAMEDYQLDIMIGEGPAARSIKIDLPPFTLIGATTRAGSLTSPLRDRFGIVQRLEFYQVPDLQYIVSRSARFMGLEMSDDGAQEVARRARGTPRIANRLLRRVRDFAEVKHDGTISADIAAQALDMLNVDAEGFDYMDRKLLLAVIDKFFGGPVGLDNLAAAIGEERETIEDVLEPYLIQQGFLQRTPRGRMATTRAWNHFGITPPEMP</sequence>
<accession>Q0T3U6</accession>
<name>RUVB_SHIF8</name>
<feature type="chain" id="PRO_1000001480" description="Holliday junction branch migration complex subunit RuvB">
    <location>
        <begin position="1"/>
        <end position="336"/>
    </location>
</feature>
<feature type="region of interest" description="Large ATPase domain (RuvB-L)" evidence="1">
    <location>
        <begin position="4"/>
        <end position="184"/>
    </location>
</feature>
<feature type="region of interest" description="Small ATPAse domain (RuvB-S)" evidence="1">
    <location>
        <begin position="185"/>
        <end position="255"/>
    </location>
</feature>
<feature type="region of interest" description="Head domain (RuvB-H)" evidence="1">
    <location>
        <begin position="258"/>
        <end position="336"/>
    </location>
</feature>
<feature type="binding site" evidence="1">
    <location>
        <position position="23"/>
    </location>
    <ligand>
        <name>ATP</name>
        <dbReference type="ChEBI" id="CHEBI:30616"/>
    </ligand>
</feature>
<feature type="binding site" evidence="1">
    <location>
        <position position="24"/>
    </location>
    <ligand>
        <name>ATP</name>
        <dbReference type="ChEBI" id="CHEBI:30616"/>
    </ligand>
</feature>
<feature type="binding site" evidence="1">
    <location>
        <position position="65"/>
    </location>
    <ligand>
        <name>ATP</name>
        <dbReference type="ChEBI" id="CHEBI:30616"/>
    </ligand>
</feature>
<feature type="binding site" evidence="1">
    <location>
        <position position="68"/>
    </location>
    <ligand>
        <name>ATP</name>
        <dbReference type="ChEBI" id="CHEBI:30616"/>
    </ligand>
</feature>
<feature type="binding site" evidence="1">
    <location>
        <position position="69"/>
    </location>
    <ligand>
        <name>ATP</name>
        <dbReference type="ChEBI" id="CHEBI:30616"/>
    </ligand>
</feature>
<feature type="binding site" evidence="1">
    <location>
        <position position="69"/>
    </location>
    <ligand>
        <name>Mg(2+)</name>
        <dbReference type="ChEBI" id="CHEBI:18420"/>
    </ligand>
</feature>
<feature type="binding site" evidence="1">
    <location>
        <position position="70"/>
    </location>
    <ligand>
        <name>ATP</name>
        <dbReference type="ChEBI" id="CHEBI:30616"/>
    </ligand>
</feature>
<feature type="binding site" evidence="1">
    <location>
        <begin position="131"/>
        <end position="133"/>
    </location>
    <ligand>
        <name>ATP</name>
        <dbReference type="ChEBI" id="CHEBI:30616"/>
    </ligand>
</feature>
<feature type="binding site" evidence="1">
    <location>
        <position position="174"/>
    </location>
    <ligand>
        <name>ATP</name>
        <dbReference type="ChEBI" id="CHEBI:30616"/>
    </ligand>
</feature>
<feature type="binding site" evidence="1">
    <location>
        <position position="184"/>
    </location>
    <ligand>
        <name>ATP</name>
        <dbReference type="ChEBI" id="CHEBI:30616"/>
    </ligand>
</feature>
<feature type="binding site" evidence="1">
    <location>
        <position position="221"/>
    </location>
    <ligand>
        <name>ATP</name>
        <dbReference type="ChEBI" id="CHEBI:30616"/>
    </ligand>
</feature>
<feature type="binding site" evidence="1">
    <location>
        <position position="294"/>
    </location>
    <ligand>
        <name>DNA</name>
        <dbReference type="ChEBI" id="CHEBI:16991"/>
    </ligand>
</feature>
<feature type="binding site" evidence="1">
    <location>
        <position position="313"/>
    </location>
    <ligand>
        <name>DNA</name>
        <dbReference type="ChEBI" id="CHEBI:16991"/>
    </ligand>
</feature>
<feature type="binding site" evidence="1">
    <location>
        <position position="318"/>
    </location>
    <ligand>
        <name>DNA</name>
        <dbReference type="ChEBI" id="CHEBI:16991"/>
    </ligand>
</feature>
<dbReference type="EC" id="3.6.4.-" evidence="1"/>
<dbReference type="EMBL" id="CP000266">
    <property type="protein sequence ID" value="ABF04019.1"/>
    <property type="molecule type" value="Genomic_DNA"/>
</dbReference>
<dbReference type="RefSeq" id="WP_000568525.1">
    <property type="nucleotide sequence ID" value="NC_008258.1"/>
</dbReference>
<dbReference type="SMR" id="Q0T3U6"/>
<dbReference type="KEGG" id="sfv:SFV_1862"/>
<dbReference type="HOGENOM" id="CLU_055599_1_0_6"/>
<dbReference type="Proteomes" id="UP000000659">
    <property type="component" value="Chromosome"/>
</dbReference>
<dbReference type="GO" id="GO:0005737">
    <property type="term" value="C:cytoplasm"/>
    <property type="evidence" value="ECO:0007669"/>
    <property type="project" value="UniProtKB-SubCell"/>
</dbReference>
<dbReference type="GO" id="GO:0048476">
    <property type="term" value="C:Holliday junction resolvase complex"/>
    <property type="evidence" value="ECO:0007669"/>
    <property type="project" value="UniProtKB-UniRule"/>
</dbReference>
<dbReference type="GO" id="GO:0005524">
    <property type="term" value="F:ATP binding"/>
    <property type="evidence" value="ECO:0007669"/>
    <property type="project" value="UniProtKB-UniRule"/>
</dbReference>
<dbReference type="GO" id="GO:0016887">
    <property type="term" value="F:ATP hydrolysis activity"/>
    <property type="evidence" value="ECO:0007669"/>
    <property type="project" value="InterPro"/>
</dbReference>
<dbReference type="GO" id="GO:0000400">
    <property type="term" value="F:four-way junction DNA binding"/>
    <property type="evidence" value="ECO:0007669"/>
    <property type="project" value="UniProtKB-UniRule"/>
</dbReference>
<dbReference type="GO" id="GO:0009378">
    <property type="term" value="F:four-way junction helicase activity"/>
    <property type="evidence" value="ECO:0007669"/>
    <property type="project" value="InterPro"/>
</dbReference>
<dbReference type="GO" id="GO:0006310">
    <property type="term" value="P:DNA recombination"/>
    <property type="evidence" value="ECO:0007669"/>
    <property type="project" value="UniProtKB-UniRule"/>
</dbReference>
<dbReference type="GO" id="GO:0006281">
    <property type="term" value="P:DNA repair"/>
    <property type="evidence" value="ECO:0007669"/>
    <property type="project" value="UniProtKB-UniRule"/>
</dbReference>
<dbReference type="CDD" id="cd00009">
    <property type="entry name" value="AAA"/>
    <property type="match status" value="1"/>
</dbReference>
<dbReference type="FunFam" id="1.10.10.10:FF:000086">
    <property type="entry name" value="Holliday junction ATP-dependent DNA helicase RuvB"/>
    <property type="match status" value="1"/>
</dbReference>
<dbReference type="FunFam" id="1.10.8.60:FF:000023">
    <property type="entry name" value="Holliday junction ATP-dependent DNA helicase RuvB"/>
    <property type="match status" value="1"/>
</dbReference>
<dbReference type="FunFam" id="3.40.50.300:FF:000073">
    <property type="entry name" value="Holliday junction ATP-dependent DNA helicase RuvB"/>
    <property type="match status" value="1"/>
</dbReference>
<dbReference type="Gene3D" id="1.10.8.60">
    <property type="match status" value="1"/>
</dbReference>
<dbReference type="Gene3D" id="3.40.50.300">
    <property type="entry name" value="P-loop containing nucleotide triphosphate hydrolases"/>
    <property type="match status" value="1"/>
</dbReference>
<dbReference type="Gene3D" id="1.10.10.10">
    <property type="entry name" value="Winged helix-like DNA-binding domain superfamily/Winged helix DNA-binding domain"/>
    <property type="match status" value="1"/>
</dbReference>
<dbReference type="HAMAP" id="MF_00016">
    <property type="entry name" value="DNA_HJ_migration_RuvB"/>
    <property type="match status" value="1"/>
</dbReference>
<dbReference type="InterPro" id="IPR003593">
    <property type="entry name" value="AAA+_ATPase"/>
</dbReference>
<dbReference type="InterPro" id="IPR041445">
    <property type="entry name" value="AAA_lid_4"/>
</dbReference>
<dbReference type="InterPro" id="IPR004605">
    <property type="entry name" value="DNA_helicase_Holl-junc_RuvB"/>
</dbReference>
<dbReference type="InterPro" id="IPR027417">
    <property type="entry name" value="P-loop_NTPase"/>
</dbReference>
<dbReference type="InterPro" id="IPR008824">
    <property type="entry name" value="RuvB-like_N"/>
</dbReference>
<dbReference type="InterPro" id="IPR008823">
    <property type="entry name" value="RuvB_C"/>
</dbReference>
<dbReference type="InterPro" id="IPR036388">
    <property type="entry name" value="WH-like_DNA-bd_sf"/>
</dbReference>
<dbReference type="InterPro" id="IPR036390">
    <property type="entry name" value="WH_DNA-bd_sf"/>
</dbReference>
<dbReference type="NCBIfam" id="NF000868">
    <property type="entry name" value="PRK00080.1"/>
    <property type="match status" value="1"/>
</dbReference>
<dbReference type="NCBIfam" id="TIGR00635">
    <property type="entry name" value="ruvB"/>
    <property type="match status" value="1"/>
</dbReference>
<dbReference type="PANTHER" id="PTHR42848">
    <property type="match status" value="1"/>
</dbReference>
<dbReference type="PANTHER" id="PTHR42848:SF1">
    <property type="entry name" value="HOLLIDAY JUNCTION BRANCH MIGRATION COMPLEX SUBUNIT RUVB"/>
    <property type="match status" value="1"/>
</dbReference>
<dbReference type="Pfam" id="PF17864">
    <property type="entry name" value="AAA_lid_4"/>
    <property type="match status" value="1"/>
</dbReference>
<dbReference type="Pfam" id="PF05491">
    <property type="entry name" value="RuvB_C"/>
    <property type="match status" value="1"/>
</dbReference>
<dbReference type="Pfam" id="PF05496">
    <property type="entry name" value="RuvB_N"/>
    <property type="match status" value="1"/>
</dbReference>
<dbReference type="SMART" id="SM00382">
    <property type="entry name" value="AAA"/>
    <property type="match status" value="1"/>
</dbReference>
<dbReference type="SUPFAM" id="SSF52540">
    <property type="entry name" value="P-loop containing nucleoside triphosphate hydrolases"/>
    <property type="match status" value="1"/>
</dbReference>
<dbReference type="SUPFAM" id="SSF46785">
    <property type="entry name" value="Winged helix' DNA-binding domain"/>
    <property type="match status" value="1"/>
</dbReference>
<organism>
    <name type="scientific">Shigella flexneri serotype 5b (strain 8401)</name>
    <dbReference type="NCBI Taxonomy" id="373384"/>
    <lineage>
        <taxon>Bacteria</taxon>
        <taxon>Pseudomonadati</taxon>
        <taxon>Pseudomonadota</taxon>
        <taxon>Gammaproteobacteria</taxon>
        <taxon>Enterobacterales</taxon>
        <taxon>Enterobacteriaceae</taxon>
        <taxon>Shigella</taxon>
    </lineage>
</organism>
<evidence type="ECO:0000255" key="1">
    <source>
        <dbReference type="HAMAP-Rule" id="MF_00016"/>
    </source>
</evidence>
<proteinExistence type="inferred from homology"/>
<keyword id="KW-0067">ATP-binding</keyword>
<keyword id="KW-0963">Cytoplasm</keyword>
<keyword id="KW-0227">DNA damage</keyword>
<keyword id="KW-0233">DNA recombination</keyword>
<keyword id="KW-0234">DNA repair</keyword>
<keyword id="KW-0238">DNA-binding</keyword>
<keyword id="KW-0378">Hydrolase</keyword>
<keyword id="KW-0547">Nucleotide-binding</keyword>
<gene>
    <name evidence="1" type="primary">ruvB</name>
    <name type="ordered locus">SFV_1862</name>
</gene>
<protein>
    <recommendedName>
        <fullName evidence="1">Holliday junction branch migration complex subunit RuvB</fullName>
        <ecNumber evidence="1">3.6.4.-</ecNumber>
    </recommendedName>
</protein>
<comment type="function">
    <text evidence="1">The RuvA-RuvB-RuvC complex processes Holliday junction (HJ) DNA during genetic recombination and DNA repair, while the RuvA-RuvB complex plays an important role in the rescue of blocked DNA replication forks via replication fork reversal (RFR). RuvA specifically binds to HJ cruciform DNA, conferring on it an open structure. The RuvB hexamer acts as an ATP-dependent pump, pulling dsDNA into and through the RuvAB complex. RuvB forms 2 homohexamers on either side of HJ DNA bound by 1 or 2 RuvA tetramers; 4 subunits per hexamer contact DNA at a time. Coordinated motions by a converter formed by DNA-disengaged RuvB subunits stimulates ATP hydrolysis and nucleotide exchange. Immobilization of the converter enables RuvB to convert the ATP-contained energy into a lever motion, pulling 2 nucleotides of DNA out of the RuvA tetramer per ATP hydrolyzed, thus driving DNA branch migration. The RuvB motors rotate together with the DNA substrate, which together with the progressing nucleotide cycle form the mechanistic basis for DNA recombination by continuous HJ branch migration. Branch migration allows RuvC to scan DNA until it finds its consensus sequence, where it cleaves and resolves cruciform DNA.</text>
</comment>
<comment type="catalytic activity">
    <reaction evidence="1">
        <text>ATP + H2O = ADP + phosphate + H(+)</text>
        <dbReference type="Rhea" id="RHEA:13065"/>
        <dbReference type="ChEBI" id="CHEBI:15377"/>
        <dbReference type="ChEBI" id="CHEBI:15378"/>
        <dbReference type="ChEBI" id="CHEBI:30616"/>
        <dbReference type="ChEBI" id="CHEBI:43474"/>
        <dbReference type="ChEBI" id="CHEBI:456216"/>
    </reaction>
</comment>
<comment type="subunit">
    <text evidence="1">Homohexamer. Forms an RuvA(8)-RuvB(12)-Holliday junction (HJ) complex. HJ DNA is sandwiched between 2 RuvA tetramers; dsDNA enters through RuvA and exits via RuvB. An RuvB hexamer assembles on each DNA strand where it exits the tetramer. Each RuvB hexamer is contacted by two RuvA subunits (via domain III) on 2 adjacent RuvB subunits; this complex drives branch migration. In the full resolvosome a probable DNA-RuvA(4)-RuvB(12)-RuvC(2) complex forms which resolves the HJ.</text>
</comment>
<comment type="subcellular location">
    <subcellularLocation>
        <location evidence="1">Cytoplasm</location>
    </subcellularLocation>
</comment>
<comment type="domain">
    <text evidence="1">Has 3 domains, the large (RuvB-L) and small ATPase (RuvB-S) domains and the C-terminal head (RuvB-H) domain. The head domain binds DNA, while the ATPase domains jointly bind ATP, ADP or are empty depending on the state of the subunit in the translocation cycle. During a single DNA translocation step the structure of each domain remains the same, but their relative positions change.</text>
</comment>
<comment type="similarity">
    <text evidence="1">Belongs to the RuvB family.</text>
</comment>
<reference key="1">
    <citation type="journal article" date="2006" name="BMC Genomics">
        <title>Complete genome sequence of Shigella flexneri 5b and comparison with Shigella flexneri 2a.</title>
        <authorList>
            <person name="Nie H."/>
            <person name="Yang F."/>
            <person name="Zhang X."/>
            <person name="Yang J."/>
            <person name="Chen L."/>
            <person name="Wang J."/>
            <person name="Xiong Z."/>
            <person name="Peng J."/>
            <person name="Sun L."/>
            <person name="Dong J."/>
            <person name="Xue Y."/>
            <person name="Xu X."/>
            <person name="Chen S."/>
            <person name="Yao Z."/>
            <person name="Shen Y."/>
            <person name="Jin Q."/>
        </authorList>
    </citation>
    <scope>NUCLEOTIDE SEQUENCE [LARGE SCALE GENOMIC DNA]</scope>
    <source>
        <strain>8401</strain>
    </source>
</reference>